<reference key="1">
    <citation type="journal article" date="2004" name="Nucleic Acids Res.">
        <title>The genome sequence of Bacillus cereus ATCC 10987 reveals metabolic adaptations and a large plasmid related to Bacillus anthracis pXO1.</title>
        <authorList>
            <person name="Rasko D.A."/>
            <person name="Ravel J."/>
            <person name="Oekstad O.A."/>
            <person name="Helgason E."/>
            <person name="Cer R.Z."/>
            <person name="Jiang L."/>
            <person name="Shores K.A."/>
            <person name="Fouts D.E."/>
            <person name="Tourasse N.J."/>
            <person name="Angiuoli S.V."/>
            <person name="Kolonay J.F."/>
            <person name="Nelson W.C."/>
            <person name="Kolstoe A.-B."/>
            <person name="Fraser C.M."/>
            <person name="Read T.D."/>
        </authorList>
    </citation>
    <scope>NUCLEOTIDE SEQUENCE [LARGE SCALE GENOMIC DNA]</scope>
    <source>
        <strain>ATCC 10987 / NRS 248</strain>
    </source>
</reference>
<name>RS9_BACC1</name>
<organism>
    <name type="scientific">Bacillus cereus (strain ATCC 10987 / NRS 248)</name>
    <dbReference type="NCBI Taxonomy" id="222523"/>
    <lineage>
        <taxon>Bacteria</taxon>
        <taxon>Bacillati</taxon>
        <taxon>Bacillota</taxon>
        <taxon>Bacilli</taxon>
        <taxon>Bacillales</taxon>
        <taxon>Bacillaceae</taxon>
        <taxon>Bacillus</taxon>
        <taxon>Bacillus cereus group</taxon>
    </lineage>
</organism>
<comment type="similarity">
    <text evidence="1">Belongs to the universal ribosomal protein uS9 family.</text>
</comment>
<dbReference type="EMBL" id="AE017194">
    <property type="protein sequence ID" value="AAS39080.1"/>
    <property type="molecule type" value="Genomic_DNA"/>
</dbReference>
<dbReference type="SMR" id="Q73F62"/>
<dbReference type="KEGG" id="bca:BCE_0144"/>
<dbReference type="HOGENOM" id="CLU_046483_2_1_9"/>
<dbReference type="Proteomes" id="UP000002527">
    <property type="component" value="Chromosome"/>
</dbReference>
<dbReference type="GO" id="GO:0022627">
    <property type="term" value="C:cytosolic small ribosomal subunit"/>
    <property type="evidence" value="ECO:0007669"/>
    <property type="project" value="TreeGrafter"/>
</dbReference>
<dbReference type="GO" id="GO:0003723">
    <property type="term" value="F:RNA binding"/>
    <property type="evidence" value="ECO:0007669"/>
    <property type="project" value="TreeGrafter"/>
</dbReference>
<dbReference type="GO" id="GO:0003735">
    <property type="term" value="F:structural constituent of ribosome"/>
    <property type="evidence" value="ECO:0007669"/>
    <property type="project" value="InterPro"/>
</dbReference>
<dbReference type="GO" id="GO:0006412">
    <property type="term" value="P:translation"/>
    <property type="evidence" value="ECO:0007669"/>
    <property type="project" value="UniProtKB-UniRule"/>
</dbReference>
<dbReference type="FunFam" id="3.30.230.10:FF:000001">
    <property type="entry name" value="30S ribosomal protein S9"/>
    <property type="match status" value="1"/>
</dbReference>
<dbReference type="Gene3D" id="3.30.230.10">
    <property type="match status" value="1"/>
</dbReference>
<dbReference type="HAMAP" id="MF_00532_B">
    <property type="entry name" value="Ribosomal_uS9_B"/>
    <property type="match status" value="1"/>
</dbReference>
<dbReference type="InterPro" id="IPR020568">
    <property type="entry name" value="Ribosomal_Su5_D2-typ_SF"/>
</dbReference>
<dbReference type="InterPro" id="IPR000754">
    <property type="entry name" value="Ribosomal_uS9"/>
</dbReference>
<dbReference type="InterPro" id="IPR023035">
    <property type="entry name" value="Ribosomal_uS9_bac/plastid"/>
</dbReference>
<dbReference type="InterPro" id="IPR020574">
    <property type="entry name" value="Ribosomal_uS9_CS"/>
</dbReference>
<dbReference type="InterPro" id="IPR014721">
    <property type="entry name" value="Ribsml_uS5_D2-typ_fold_subgr"/>
</dbReference>
<dbReference type="NCBIfam" id="NF001099">
    <property type="entry name" value="PRK00132.1"/>
    <property type="match status" value="1"/>
</dbReference>
<dbReference type="PANTHER" id="PTHR21569">
    <property type="entry name" value="RIBOSOMAL PROTEIN S9"/>
    <property type="match status" value="1"/>
</dbReference>
<dbReference type="PANTHER" id="PTHR21569:SF1">
    <property type="entry name" value="SMALL RIBOSOMAL SUBUNIT PROTEIN US9M"/>
    <property type="match status" value="1"/>
</dbReference>
<dbReference type="Pfam" id="PF00380">
    <property type="entry name" value="Ribosomal_S9"/>
    <property type="match status" value="1"/>
</dbReference>
<dbReference type="SUPFAM" id="SSF54211">
    <property type="entry name" value="Ribosomal protein S5 domain 2-like"/>
    <property type="match status" value="1"/>
</dbReference>
<dbReference type="PROSITE" id="PS00360">
    <property type="entry name" value="RIBOSOMAL_S9"/>
    <property type="match status" value="1"/>
</dbReference>
<gene>
    <name evidence="1" type="primary">rpsI</name>
    <name type="ordered locus">BCE_0144</name>
</gene>
<protein>
    <recommendedName>
        <fullName evidence="1">Small ribosomal subunit protein uS9</fullName>
    </recommendedName>
    <alternativeName>
        <fullName evidence="2">30S ribosomal protein S9</fullName>
    </alternativeName>
</protein>
<evidence type="ECO:0000255" key="1">
    <source>
        <dbReference type="HAMAP-Rule" id="MF_00532"/>
    </source>
</evidence>
<evidence type="ECO:0000305" key="2"/>
<keyword id="KW-0687">Ribonucleoprotein</keyword>
<keyword id="KW-0689">Ribosomal protein</keyword>
<proteinExistence type="inferred from homology"/>
<sequence>MAQVQYYGTGRRKSSVARVRLVPGEGRVIINGRDFENYIPFAALREVVKQPLVATETLGNYDVLVNVNGGGYTGQAGAIRHGISRALLKADPEYRLTLKRAGLLTRDARMKERKKYGLKGARRAPQFSKR</sequence>
<feature type="chain" id="PRO_1000051162" description="Small ribosomal subunit protein uS9">
    <location>
        <begin position="1"/>
        <end position="130"/>
    </location>
</feature>
<accession>Q73F62</accession>